<proteinExistence type="inferred from homology"/>
<comment type="function">
    <text evidence="1">Component of the cytosolic iron-sulfur (Fe-S) protein assembly (CIA) machinery required for the maturation of extramitochondrial Fe-S proteins. Part of an electron transfer chain functioning in an early step of cytosolic Fe-S biogenesis, facilitating the de novo assembly of a [4Fe-4S] cluster on the scaffold complex CFD1-NBP35. Electrons are transferred to DRE2 from NADPH via the FAD- and FMN-containing protein TAH18. TAH18-DRE2 are also required for the assembly of the diferric tyrosyl radical cofactor of ribonucleotide reductase (RNR), probably by providing electrons for reduction during radical cofactor maturation in the catalytic small subunit RNR2.</text>
</comment>
<comment type="cofactor">
    <cofactor evidence="1">
        <name>[2Fe-2S] cluster</name>
        <dbReference type="ChEBI" id="CHEBI:190135"/>
    </cofactor>
</comment>
<comment type="cofactor">
    <cofactor evidence="1">
        <name>[4Fe-4S] cluster</name>
        <dbReference type="ChEBI" id="CHEBI:49883"/>
    </cofactor>
</comment>
<comment type="subunit">
    <text evidence="1">Monomer. Interacts with TAH18. Interacts with MIA40.</text>
</comment>
<comment type="subcellular location">
    <subcellularLocation>
        <location evidence="1">Cytoplasm</location>
    </subcellularLocation>
    <subcellularLocation>
        <location evidence="1">Mitochondrion intermembrane space</location>
    </subcellularLocation>
</comment>
<comment type="domain">
    <text evidence="1">The C-terminal domain binds 2 Fe-S clusters but is otherwise mostly in an intrinsically disordered conformation.</text>
</comment>
<comment type="domain">
    <text evidence="1">The N-terminal domain has structural similarity with S-adenosyl-L-methionine-dependent methyltransferases, but does not bind S-adenosyl-L-methionine. It is required for correct assembly of the 2 Fe-S clusters.</text>
</comment>
<comment type="domain">
    <text evidence="1">The twin Cx2C motifs are involved in the recognition by the mitochondrial MIA40-ERV1 disulfide relay system. The formation of 2 disulfide bonds in the Cx2C motifs through dithiol/disulfide exchange reactions effectively traps the protein in the mitochondrial intermembrane space.</text>
</comment>
<comment type="similarity">
    <text evidence="1">Belongs to the anamorsin family.</text>
</comment>
<feature type="chain" id="PRO_0000324863" description="Fe-S cluster assembly protein DRE2">
    <location>
        <begin position="1"/>
        <end position="339"/>
    </location>
</feature>
<feature type="region of interest" description="N-terminal SAM-like domain" evidence="1">
    <location>
        <begin position="1"/>
        <end position="157"/>
    </location>
</feature>
<feature type="region of interest" description="Linker" evidence="1">
    <location>
        <begin position="158"/>
        <end position="206"/>
    </location>
</feature>
<feature type="region of interest" description="Fe-S binding site A" evidence="1">
    <location>
        <begin position="221"/>
        <end position="238"/>
    </location>
</feature>
<feature type="region of interest" description="Fe-S binding site B" evidence="1">
    <location>
        <begin position="302"/>
        <end position="316"/>
    </location>
</feature>
<feature type="short sequence motif" description="Cx2C motif 1" evidence="1">
    <location>
        <begin position="302"/>
        <end position="305"/>
    </location>
</feature>
<feature type="short sequence motif" description="Cx2C motif 2" evidence="1">
    <location>
        <begin position="313"/>
        <end position="316"/>
    </location>
</feature>
<feature type="binding site" evidence="1">
    <location>
        <position position="221"/>
    </location>
    <ligand>
        <name>[2Fe-2S] cluster</name>
        <dbReference type="ChEBI" id="CHEBI:190135"/>
    </ligand>
</feature>
<feature type="binding site" evidence="1">
    <location>
        <position position="233"/>
    </location>
    <ligand>
        <name>[2Fe-2S] cluster</name>
        <dbReference type="ChEBI" id="CHEBI:190135"/>
    </ligand>
</feature>
<feature type="binding site" evidence="1">
    <location>
        <position position="236"/>
    </location>
    <ligand>
        <name>[2Fe-2S] cluster</name>
        <dbReference type="ChEBI" id="CHEBI:190135"/>
    </ligand>
</feature>
<feature type="binding site" evidence="1">
    <location>
        <position position="238"/>
    </location>
    <ligand>
        <name>[2Fe-2S] cluster</name>
        <dbReference type="ChEBI" id="CHEBI:190135"/>
    </ligand>
</feature>
<feature type="binding site" evidence="1">
    <location>
        <position position="302"/>
    </location>
    <ligand>
        <name>[4Fe-4S] cluster</name>
        <dbReference type="ChEBI" id="CHEBI:49883"/>
    </ligand>
</feature>
<feature type="binding site" evidence="1">
    <location>
        <position position="305"/>
    </location>
    <ligand>
        <name>[4Fe-4S] cluster</name>
        <dbReference type="ChEBI" id="CHEBI:49883"/>
    </ligand>
</feature>
<feature type="binding site" evidence="1">
    <location>
        <position position="313"/>
    </location>
    <ligand>
        <name>[4Fe-4S] cluster</name>
        <dbReference type="ChEBI" id="CHEBI:49883"/>
    </ligand>
</feature>
<feature type="binding site" evidence="1">
    <location>
        <position position="316"/>
    </location>
    <ligand>
        <name>[4Fe-4S] cluster</name>
        <dbReference type="ChEBI" id="CHEBI:49883"/>
    </ligand>
</feature>
<keyword id="KW-0001">2Fe-2S</keyword>
<keyword id="KW-0004">4Fe-4S</keyword>
<keyword id="KW-0963">Cytoplasm</keyword>
<keyword id="KW-0408">Iron</keyword>
<keyword id="KW-0411">Iron-sulfur</keyword>
<keyword id="KW-0479">Metal-binding</keyword>
<keyword id="KW-0496">Mitochondrion</keyword>
<keyword id="KW-1185">Reference proteome</keyword>
<accession>Q6BQ02</accession>
<reference key="1">
    <citation type="journal article" date="2004" name="Nature">
        <title>Genome evolution in yeasts.</title>
        <authorList>
            <person name="Dujon B."/>
            <person name="Sherman D."/>
            <person name="Fischer G."/>
            <person name="Durrens P."/>
            <person name="Casaregola S."/>
            <person name="Lafontaine I."/>
            <person name="de Montigny J."/>
            <person name="Marck C."/>
            <person name="Neuveglise C."/>
            <person name="Talla E."/>
            <person name="Goffard N."/>
            <person name="Frangeul L."/>
            <person name="Aigle M."/>
            <person name="Anthouard V."/>
            <person name="Babour A."/>
            <person name="Barbe V."/>
            <person name="Barnay S."/>
            <person name="Blanchin S."/>
            <person name="Beckerich J.-M."/>
            <person name="Beyne E."/>
            <person name="Bleykasten C."/>
            <person name="Boisrame A."/>
            <person name="Boyer J."/>
            <person name="Cattolico L."/>
            <person name="Confanioleri F."/>
            <person name="de Daruvar A."/>
            <person name="Despons L."/>
            <person name="Fabre E."/>
            <person name="Fairhead C."/>
            <person name="Ferry-Dumazet H."/>
            <person name="Groppi A."/>
            <person name="Hantraye F."/>
            <person name="Hennequin C."/>
            <person name="Jauniaux N."/>
            <person name="Joyet P."/>
            <person name="Kachouri R."/>
            <person name="Kerrest A."/>
            <person name="Koszul R."/>
            <person name="Lemaire M."/>
            <person name="Lesur I."/>
            <person name="Ma L."/>
            <person name="Muller H."/>
            <person name="Nicaud J.-M."/>
            <person name="Nikolski M."/>
            <person name="Oztas S."/>
            <person name="Ozier-Kalogeropoulos O."/>
            <person name="Pellenz S."/>
            <person name="Potier S."/>
            <person name="Richard G.-F."/>
            <person name="Straub M.-L."/>
            <person name="Suleau A."/>
            <person name="Swennen D."/>
            <person name="Tekaia F."/>
            <person name="Wesolowski-Louvel M."/>
            <person name="Westhof E."/>
            <person name="Wirth B."/>
            <person name="Zeniou-Meyer M."/>
            <person name="Zivanovic Y."/>
            <person name="Bolotin-Fukuhara M."/>
            <person name="Thierry A."/>
            <person name="Bouchier C."/>
            <person name="Caudron B."/>
            <person name="Scarpelli C."/>
            <person name="Gaillardin C."/>
            <person name="Weissenbach J."/>
            <person name="Wincker P."/>
            <person name="Souciet J.-L."/>
        </authorList>
    </citation>
    <scope>NUCLEOTIDE SEQUENCE [LARGE SCALE GENOMIC DNA]</scope>
    <source>
        <strain>ATCC 36239 / CBS 767 / BCRC 21394 / JCM 1990 / NBRC 0083 / IGC 2968</strain>
    </source>
</reference>
<dbReference type="EMBL" id="CR382137">
    <property type="protein sequence ID" value="CAG87954.2"/>
    <property type="molecule type" value="Genomic_DNA"/>
</dbReference>
<dbReference type="RefSeq" id="XP_459718.2">
    <property type="nucleotide sequence ID" value="XM_459718.1"/>
</dbReference>
<dbReference type="SMR" id="Q6BQ02"/>
<dbReference type="FunCoup" id="Q6BQ02">
    <property type="interactions" value="183"/>
</dbReference>
<dbReference type="STRING" id="284592.Q6BQ02"/>
<dbReference type="GeneID" id="2902781"/>
<dbReference type="KEGG" id="dha:DEHA2E09482g"/>
<dbReference type="VEuPathDB" id="FungiDB:DEHA2E09482g"/>
<dbReference type="eggNOG" id="KOG4020">
    <property type="taxonomic scope" value="Eukaryota"/>
</dbReference>
<dbReference type="HOGENOM" id="CLU_067152_0_0_1"/>
<dbReference type="InParanoid" id="Q6BQ02"/>
<dbReference type="OMA" id="TMITCGK"/>
<dbReference type="OrthoDB" id="311633at2759"/>
<dbReference type="Proteomes" id="UP000000599">
    <property type="component" value="Chromosome E"/>
</dbReference>
<dbReference type="GO" id="GO:0097361">
    <property type="term" value="C:cytosolic [4Fe-4S] assembly targeting complex"/>
    <property type="evidence" value="ECO:0007669"/>
    <property type="project" value="EnsemblFungi"/>
</dbReference>
<dbReference type="GO" id="GO:0005758">
    <property type="term" value="C:mitochondrial intermembrane space"/>
    <property type="evidence" value="ECO:0007669"/>
    <property type="project" value="UniProtKB-SubCell"/>
</dbReference>
<dbReference type="GO" id="GO:0051537">
    <property type="term" value="F:2 iron, 2 sulfur cluster binding"/>
    <property type="evidence" value="ECO:0007669"/>
    <property type="project" value="UniProtKB-UniRule"/>
</dbReference>
<dbReference type="GO" id="GO:0051539">
    <property type="term" value="F:4 iron, 4 sulfur cluster binding"/>
    <property type="evidence" value="ECO:0007669"/>
    <property type="project" value="UniProtKB-KW"/>
</dbReference>
<dbReference type="GO" id="GO:0009055">
    <property type="term" value="F:electron transfer activity"/>
    <property type="evidence" value="ECO:0007669"/>
    <property type="project" value="UniProtKB-UniRule"/>
</dbReference>
<dbReference type="GO" id="GO:0046872">
    <property type="term" value="F:metal ion binding"/>
    <property type="evidence" value="ECO:0007669"/>
    <property type="project" value="UniProtKB-KW"/>
</dbReference>
<dbReference type="GO" id="GO:0034599">
    <property type="term" value="P:cellular response to oxidative stress"/>
    <property type="evidence" value="ECO:0007669"/>
    <property type="project" value="EnsemblFungi"/>
</dbReference>
<dbReference type="GO" id="GO:0016226">
    <property type="term" value="P:iron-sulfur cluster assembly"/>
    <property type="evidence" value="ECO:0007669"/>
    <property type="project" value="UniProtKB-UniRule"/>
</dbReference>
<dbReference type="GO" id="GO:1901299">
    <property type="term" value="P:negative regulation of hydrogen peroxide-mediated programmed cell death"/>
    <property type="evidence" value="ECO:0007669"/>
    <property type="project" value="EnsemblFungi"/>
</dbReference>
<dbReference type="GO" id="GO:0045019">
    <property type="term" value="P:negative regulation of nitric oxide biosynthetic process"/>
    <property type="evidence" value="ECO:0007669"/>
    <property type="project" value="EnsemblFungi"/>
</dbReference>
<dbReference type="Gene3D" id="3.40.50.11000">
    <property type="entry name" value="Fe-S cluster assembly protein Dre2, N-terminal domain"/>
    <property type="match status" value="1"/>
</dbReference>
<dbReference type="HAMAP" id="MF_03115">
    <property type="entry name" value="Anamorsin"/>
    <property type="match status" value="1"/>
</dbReference>
<dbReference type="InterPro" id="IPR007785">
    <property type="entry name" value="Anamorsin"/>
</dbReference>
<dbReference type="InterPro" id="IPR046408">
    <property type="entry name" value="CIAPIN1"/>
</dbReference>
<dbReference type="InterPro" id="IPR031838">
    <property type="entry name" value="Dre2_N"/>
</dbReference>
<dbReference type="PANTHER" id="PTHR13273">
    <property type="entry name" value="ANAMORSIN"/>
    <property type="match status" value="1"/>
</dbReference>
<dbReference type="PANTHER" id="PTHR13273:SF14">
    <property type="entry name" value="ANAMORSIN"/>
    <property type="match status" value="1"/>
</dbReference>
<dbReference type="Pfam" id="PF05093">
    <property type="entry name" value="CIAPIN1"/>
    <property type="match status" value="1"/>
</dbReference>
<dbReference type="Pfam" id="PF16803">
    <property type="entry name" value="DRE2_N"/>
    <property type="match status" value="1"/>
</dbReference>
<name>DRE2_DEBHA</name>
<gene>
    <name evidence="1" type="primary">DRE2</name>
    <name type="ordered locus">DEHA2E09482g</name>
</gene>
<sequence>MTRILLLLHPTAVTDEQLVTKVKSEISSTNSDADVVQHIIDRVANKIVKLENNTFDEVIYINPNEGEFNRQLPVSTITIIYDSLVEDGVLKGDLPTNQNLDAIMSGFIVGEQGNWIKPKAVGESVSIPLKKKEVAVGGASKQCLPSFKKLSSTHAAVGLTDTSASNTDEENDDVNSKRKLQETKLAYFSESDDEDEEDQIIDENNLISEVRTANLVVPKKCELPNGKKRRKACKDCTCGLKEIEAQETSDKSTLQNSILNQMVQSANLEAMKIEEKMKNAVKFDDNDLAEIDFTVEGKKGGCSSCSLGDAFRCDGCPYLGLPPFKPGEVVSIDNFGEDI</sequence>
<protein>
    <recommendedName>
        <fullName evidence="1">Fe-S cluster assembly protein DRE2</fullName>
    </recommendedName>
    <alternativeName>
        <fullName evidence="1">Anamorsin homolog</fullName>
    </alternativeName>
</protein>
<organism>
    <name type="scientific">Debaryomyces hansenii (strain ATCC 36239 / CBS 767 / BCRC 21394 / JCM 1990 / NBRC 0083 / IGC 2968)</name>
    <name type="common">Yeast</name>
    <name type="synonym">Torulaspora hansenii</name>
    <dbReference type="NCBI Taxonomy" id="284592"/>
    <lineage>
        <taxon>Eukaryota</taxon>
        <taxon>Fungi</taxon>
        <taxon>Dikarya</taxon>
        <taxon>Ascomycota</taxon>
        <taxon>Saccharomycotina</taxon>
        <taxon>Pichiomycetes</taxon>
        <taxon>Debaryomycetaceae</taxon>
        <taxon>Debaryomyces</taxon>
    </lineage>
</organism>
<evidence type="ECO:0000255" key="1">
    <source>
        <dbReference type="HAMAP-Rule" id="MF_03115"/>
    </source>
</evidence>